<dbReference type="EMBL" id="CP001616">
    <property type="protein sequence ID" value="ACQ94120.1"/>
    <property type="molecule type" value="Genomic_DNA"/>
</dbReference>
<dbReference type="RefSeq" id="WP_015879569.1">
    <property type="nucleotide sequence ID" value="NC_012691.1"/>
</dbReference>
<dbReference type="SMR" id="C4LAE5"/>
<dbReference type="STRING" id="595494.Tola_2526"/>
<dbReference type="KEGG" id="tau:Tola_2526"/>
<dbReference type="eggNOG" id="COG1327">
    <property type="taxonomic scope" value="Bacteria"/>
</dbReference>
<dbReference type="HOGENOM" id="CLU_108412_0_0_6"/>
<dbReference type="OrthoDB" id="9807461at2"/>
<dbReference type="Proteomes" id="UP000009073">
    <property type="component" value="Chromosome"/>
</dbReference>
<dbReference type="GO" id="GO:0005524">
    <property type="term" value="F:ATP binding"/>
    <property type="evidence" value="ECO:0007669"/>
    <property type="project" value="UniProtKB-KW"/>
</dbReference>
<dbReference type="GO" id="GO:0003677">
    <property type="term" value="F:DNA binding"/>
    <property type="evidence" value="ECO:0007669"/>
    <property type="project" value="UniProtKB-KW"/>
</dbReference>
<dbReference type="GO" id="GO:0008270">
    <property type="term" value="F:zinc ion binding"/>
    <property type="evidence" value="ECO:0007669"/>
    <property type="project" value="UniProtKB-UniRule"/>
</dbReference>
<dbReference type="GO" id="GO:0045892">
    <property type="term" value="P:negative regulation of DNA-templated transcription"/>
    <property type="evidence" value="ECO:0007669"/>
    <property type="project" value="UniProtKB-UniRule"/>
</dbReference>
<dbReference type="HAMAP" id="MF_00440">
    <property type="entry name" value="NrdR"/>
    <property type="match status" value="1"/>
</dbReference>
<dbReference type="InterPro" id="IPR005144">
    <property type="entry name" value="ATP-cone_dom"/>
</dbReference>
<dbReference type="InterPro" id="IPR055173">
    <property type="entry name" value="NrdR-like_N"/>
</dbReference>
<dbReference type="InterPro" id="IPR003796">
    <property type="entry name" value="RNR_NrdR-like"/>
</dbReference>
<dbReference type="NCBIfam" id="TIGR00244">
    <property type="entry name" value="transcriptional regulator NrdR"/>
    <property type="match status" value="1"/>
</dbReference>
<dbReference type="PANTHER" id="PTHR30455">
    <property type="entry name" value="TRANSCRIPTIONAL REPRESSOR NRDR"/>
    <property type="match status" value="1"/>
</dbReference>
<dbReference type="PANTHER" id="PTHR30455:SF2">
    <property type="entry name" value="TRANSCRIPTIONAL REPRESSOR NRDR"/>
    <property type="match status" value="1"/>
</dbReference>
<dbReference type="Pfam" id="PF03477">
    <property type="entry name" value="ATP-cone"/>
    <property type="match status" value="1"/>
</dbReference>
<dbReference type="Pfam" id="PF22811">
    <property type="entry name" value="Zn_ribbon_NrdR"/>
    <property type="match status" value="1"/>
</dbReference>
<dbReference type="PROSITE" id="PS51161">
    <property type="entry name" value="ATP_CONE"/>
    <property type="match status" value="1"/>
</dbReference>
<comment type="function">
    <text evidence="1">Negatively regulates transcription of bacterial ribonucleotide reductase nrd genes and operons by binding to NrdR-boxes.</text>
</comment>
<comment type="cofactor">
    <cofactor evidence="1">
        <name>Zn(2+)</name>
        <dbReference type="ChEBI" id="CHEBI:29105"/>
    </cofactor>
    <text evidence="1">Binds 1 zinc ion.</text>
</comment>
<comment type="similarity">
    <text evidence="1">Belongs to the NrdR family.</text>
</comment>
<gene>
    <name evidence="1" type="primary">nrdR</name>
    <name type="ordered locus">Tola_2526</name>
</gene>
<protein>
    <recommendedName>
        <fullName evidence="1">Transcriptional repressor NrdR</fullName>
    </recommendedName>
</protein>
<accession>C4LAE5</accession>
<organism>
    <name type="scientific">Tolumonas auensis (strain DSM 9187 / NBRC 110442 / TA 4)</name>
    <dbReference type="NCBI Taxonomy" id="595494"/>
    <lineage>
        <taxon>Bacteria</taxon>
        <taxon>Pseudomonadati</taxon>
        <taxon>Pseudomonadota</taxon>
        <taxon>Gammaproteobacteria</taxon>
        <taxon>Aeromonadales</taxon>
        <taxon>Aeromonadaceae</taxon>
        <taxon>Tolumonas</taxon>
    </lineage>
</organism>
<feature type="chain" id="PRO_1000206128" description="Transcriptional repressor NrdR">
    <location>
        <begin position="1"/>
        <end position="149"/>
    </location>
</feature>
<feature type="domain" description="ATP-cone" evidence="1">
    <location>
        <begin position="49"/>
        <end position="139"/>
    </location>
</feature>
<feature type="zinc finger region" evidence="1">
    <location>
        <begin position="3"/>
        <end position="34"/>
    </location>
</feature>
<proteinExistence type="inferred from homology"/>
<reference key="1">
    <citation type="submission" date="2009-05" db="EMBL/GenBank/DDBJ databases">
        <title>Complete sequence of Tolumonas auensis DSM 9187.</title>
        <authorList>
            <consortium name="US DOE Joint Genome Institute"/>
            <person name="Lucas S."/>
            <person name="Copeland A."/>
            <person name="Lapidus A."/>
            <person name="Glavina del Rio T."/>
            <person name="Tice H."/>
            <person name="Bruce D."/>
            <person name="Goodwin L."/>
            <person name="Pitluck S."/>
            <person name="Chertkov O."/>
            <person name="Brettin T."/>
            <person name="Detter J.C."/>
            <person name="Han C."/>
            <person name="Larimer F."/>
            <person name="Land M."/>
            <person name="Hauser L."/>
            <person name="Kyrpides N."/>
            <person name="Mikhailova N."/>
            <person name="Spring S."/>
            <person name="Beller H."/>
        </authorList>
    </citation>
    <scope>NUCLEOTIDE SEQUENCE [LARGE SCALE GENOMIC DNA]</scope>
    <source>
        <strain>DSM 9187 / NBRC 110442 / TA 4</strain>
    </source>
</reference>
<sequence length="149" mass="17440">MHCPFCNADDTKVIDSRLVADGHQVRRRRECLVCHERFTTFEMAELVMPRVIKSNGVREPFNEDKLRNGIQRALEKRPVSTELIEQSINRIKSNLRATGEREIMSKIIGNLVMEELKLLDKVAYIRFASVYRSFEDIREFGEEIARLEK</sequence>
<keyword id="KW-0067">ATP-binding</keyword>
<keyword id="KW-0238">DNA-binding</keyword>
<keyword id="KW-0479">Metal-binding</keyword>
<keyword id="KW-0547">Nucleotide-binding</keyword>
<keyword id="KW-1185">Reference proteome</keyword>
<keyword id="KW-0678">Repressor</keyword>
<keyword id="KW-0804">Transcription</keyword>
<keyword id="KW-0805">Transcription regulation</keyword>
<keyword id="KW-0862">Zinc</keyword>
<keyword id="KW-0863">Zinc-finger</keyword>
<name>NRDR_TOLAT</name>
<evidence type="ECO:0000255" key="1">
    <source>
        <dbReference type="HAMAP-Rule" id="MF_00440"/>
    </source>
</evidence>